<evidence type="ECO:0000250" key="1"/>
<evidence type="ECO:0000255" key="2"/>
<evidence type="ECO:0000256" key="3">
    <source>
        <dbReference type="SAM" id="MobiDB-lite"/>
    </source>
</evidence>
<evidence type="ECO:0000305" key="4"/>
<keyword id="KW-0175">Coiled coil</keyword>
<keyword id="KW-0539">Nucleus</keyword>
<keyword id="KW-1185">Reference proteome</keyword>
<keyword id="KW-0687">Ribonucleoprotein</keyword>
<keyword id="KW-0690">Ribosome biogenesis</keyword>
<keyword id="KW-0698">rRNA processing</keyword>
<reference key="1">
    <citation type="journal article" date="2004" name="Nature">
        <title>Genome evolution in yeasts.</title>
        <authorList>
            <person name="Dujon B."/>
            <person name="Sherman D."/>
            <person name="Fischer G."/>
            <person name="Durrens P."/>
            <person name="Casaregola S."/>
            <person name="Lafontaine I."/>
            <person name="de Montigny J."/>
            <person name="Marck C."/>
            <person name="Neuveglise C."/>
            <person name="Talla E."/>
            <person name="Goffard N."/>
            <person name="Frangeul L."/>
            <person name="Aigle M."/>
            <person name="Anthouard V."/>
            <person name="Babour A."/>
            <person name="Barbe V."/>
            <person name="Barnay S."/>
            <person name="Blanchin S."/>
            <person name="Beckerich J.-M."/>
            <person name="Beyne E."/>
            <person name="Bleykasten C."/>
            <person name="Boisrame A."/>
            <person name="Boyer J."/>
            <person name="Cattolico L."/>
            <person name="Confanioleri F."/>
            <person name="de Daruvar A."/>
            <person name="Despons L."/>
            <person name="Fabre E."/>
            <person name="Fairhead C."/>
            <person name="Ferry-Dumazet H."/>
            <person name="Groppi A."/>
            <person name="Hantraye F."/>
            <person name="Hennequin C."/>
            <person name="Jauniaux N."/>
            <person name="Joyet P."/>
            <person name="Kachouri R."/>
            <person name="Kerrest A."/>
            <person name="Koszul R."/>
            <person name="Lemaire M."/>
            <person name="Lesur I."/>
            <person name="Ma L."/>
            <person name="Muller H."/>
            <person name="Nicaud J.-M."/>
            <person name="Nikolski M."/>
            <person name="Oztas S."/>
            <person name="Ozier-Kalogeropoulos O."/>
            <person name="Pellenz S."/>
            <person name="Potier S."/>
            <person name="Richard G.-F."/>
            <person name="Straub M.-L."/>
            <person name="Suleau A."/>
            <person name="Swennen D."/>
            <person name="Tekaia F."/>
            <person name="Wesolowski-Louvel M."/>
            <person name="Westhof E."/>
            <person name="Wirth B."/>
            <person name="Zeniou-Meyer M."/>
            <person name="Zivanovic Y."/>
            <person name="Bolotin-Fukuhara M."/>
            <person name="Thierry A."/>
            <person name="Bouchier C."/>
            <person name="Caudron B."/>
            <person name="Scarpelli C."/>
            <person name="Gaillardin C."/>
            <person name="Weissenbach J."/>
            <person name="Wincker P."/>
            <person name="Souciet J.-L."/>
        </authorList>
    </citation>
    <scope>NUCLEOTIDE SEQUENCE [LARGE SCALE GENOMIC DNA]</scope>
    <source>
        <strain>ATCC 2001 / BCRC 20586 / JCM 3761 / NBRC 0622 / NRRL Y-65 / CBS 138</strain>
    </source>
</reference>
<comment type="function">
    <text evidence="1">Component of the 90S pre-ribosome involved in the maturation of rRNAs. Required for early cleavages of the pre-RNAs in the 40S ribosomal subunit maturation pathway (By similarity).</text>
</comment>
<comment type="subunit">
    <text evidence="1">Associates with 90S and pre-40S pre-ribosomal particles.</text>
</comment>
<comment type="subcellular location">
    <subcellularLocation>
        <location evidence="1">Nucleus</location>
        <location evidence="1">Nucleolus</location>
    </subcellularLocation>
</comment>
<comment type="similarity">
    <text evidence="4">Belongs to the RRP36 family.</text>
</comment>
<accession>Q6FJP1</accession>
<dbReference type="EMBL" id="CR380959">
    <property type="protein sequence ID" value="CAG62529.1"/>
    <property type="molecule type" value="Genomic_DNA"/>
</dbReference>
<dbReference type="RefSeq" id="XP_449553.1">
    <property type="nucleotide sequence ID" value="XM_449553.1"/>
</dbReference>
<dbReference type="SMR" id="Q6FJP1"/>
<dbReference type="FunCoup" id="Q6FJP1">
    <property type="interactions" value="604"/>
</dbReference>
<dbReference type="STRING" id="284593.Q6FJP1"/>
<dbReference type="EnsemblFungi" id="CAGL0M04719g-T">
    <property type="protein sequence ID" value="CAGL0M04719g-T-p1"/>
    <property type="gene ID" value="CAGL0M04719g"/>
</dbReference>
<dbReference type="KEGG" id="cgr:2891562"/>
<dbReference type="CGD" id="CAL0136679">
    <property type="gene designation" value="CAGL0M04719g"/>
</dbReference>
<dbReference type="VEuPathDB" id="FungiDB:CAGL0M04719g"/>
<dbReference type="eggNOG" id="KOG3190">
    <property type="taxonomic scope" value="Eukaryota"/>
</dbReference>
<dbReference type="HOGENOM" id="CLU_048802_3_0_1"/>
<dbReference type="InParanoid" id="Q6FJP1"/>
<dbReference type="OMA" id="ERKEMPW"/>
<dbReference type="Proteomes" id="UP000002428">
    <property type="component" value="Chromosome M"/>
</dbReference>
<dbReference type="GO" id="GO:0030686">
    <property type="term" value="C:90S preribosome"/>
    <property type="evidence" value="ECO:0007669"/>
    <property type="project" value="TreeGrafter"/>
</dbReference>
<dbReference type="GO" id="GO:0005730">
    <property type="term" value="C:nucleolus"/>
    <property type="evidence" value="ECO:0007669"/>
    <property type="project" value="UniProtKB-SubCell"/>
</dbReference>
<dbReference type="GO" id="GO:0000462">
    <property type="term" value="P:maturation of SSU-rRNA from tricistronic rRNA transcript (SSU-rRNA, 5.8S rRNA, LSU-rRNA)"/>
    <property type="evidence" value="ECO:0007669"/>
    <property type="project" value="TreeGrafter"/>
</dbReference>
<dbReference type="InterPro" id="IPR009292">
    <property type="entry name" value="RRP36"/>
</dbReference>
<dbReference type="PANTHER" id="PTHR21738">
    <property type="entry name" value="RIBOSOMAL RNA PROCESSING PROTEIN 36 HOMOLOG"/>
    <property type="match status" value="1"/>
</dbReference>
<dbReference type="PANTHER" id="PTHR21738:SF0">
    <property type="entry name" value="RIBOSOMAL RNA PROCESSING PROTEIN 36 HOMOLOG"/>
    <property type="match status" value="1"/>
</dbReference>
<dbReference type="Pfam" id="PF06102">
    <property type="entry name" value="RRP36"/>
    <property type="match status" value="1"/>
</dbReference>
<feature type="chain" id="PRO_0000397625" description="rRNA biogenesis protein RRP36">
    <location>
        <begin position="1"/>
        <end position="313"/>
    </location>
</feature>
<feature type="region of interest" description="Disordered" evidence="3">
    <location>
        <begin position="1"/>
        <end position="157"/>
    </location>
</feature>
<feature type="region of interest" description="Disordered" evidence="3">
    <location>
        <begin position="287"/>
        <end position="313"/>
    </location>
</feature>
<feature type="coiled-coil region" evidence="2">
    <location>
        <begin position="188"/>
        <end position="244"/>
    </location>
</feature>
<feature type="compositionally biased region" description="Acidic residues" evidence="3">
    <location>
        <begin position="13"/>
        <end position="25"/>
    </location>
</feature>
<feature type="compositionally biased region" description="Acidic residues" evidence="3">
    <location>
        <begin position="39"/>
        <end position="49"/>
    </location>
</feature>
<feature type="compositionally biased region" description="Basic and acidic residues" evidence="3">
    <location>
        <begin position="85"/>
        <end position="99"/>
    </location>
</feature>
<feature type="compositionally biased region" description="Acidic residues" evidence="3">
    <location>
        <begin position="100"/>
        <end position="121"/>
    </location>
</feature>
<feature type="compositionally biased region" description="Basic residues" evidence="3">
    <location>
        <begin position="127"/>
        <end position="138"/>
    </location>
</feature>
<feature type="compositionally biased region" description="Basic and acidic residues" evidence="3">
    <location>
        <begin position="302"/>
        <end position="313"/>
    </location>
</feature>
<proteinExistence type="inferred from homology"/>
<gene>
    <name type="primary">RRP36</name>
    <name type="ordered locus">CAGL0M04719g</name>
</gene>
<sequence>MSYYFKNIKPSYDDDSDEVSDEQDLDAILASKMRGRAESDDESSEEEDDGLSKLSFGSLKKAEDQLEEEERGELRKKRKPQHSKPINDEPEVRHKVYKEEEQEESDSESGSDDGAFFEEDERDNHSRPKNKNSKKRKHAPTEHSSKKRVSKIRDIPGLEIARQAKSGIYQDVRFTKATGEATDFSVIRRRYKFLDEYREKEIEEMERLLNDKKFVNKAESREIENMKEKVRSMKSRLQSVKNRELEQQIVKDYEGKLNEGNKNRFHLKKAEKRKVIQKWKFDHMKAKQREKVMERKRKKKLGKEFKQFEFHNR</sequence>
<organism>
    <name type="scientific">Candida glabrata (strain ATCC 2001 / BCRC 20586 / JCM 3761 / NBRC 0622 / NRRL Y-65 / CBS 138)</name>
    <name type="common">Yeast</name>
    <name type="synonym">Nakaseomyces glabratus</name>
    <dbReference type="NCBI Taxonomy" id="284593"/>
    <lineage>
        <taxon>Eukaryota</taxon>
        <taxon>Fungi</taxon>
        <taxon>Dikarya</taxon>
        <taxon>Ascomycota</taxon>
        <taxon>Saccharomycotina</taxon>
        <taxon>Saccharomycetes</taxon>
        <taxon>Saccharomycetales</taxon>
        <taxon>Saccharomycetaceae</taxon>
        <taxon>Nakaseomyces</taxon>
    </lineage>
</organism>
<name>RRP36_CANGA</name>
<protein>
    <recommendedName>
        <fullName>rRNA biogenesis protein RRP36</fullName>
    </recommendedName>
    <alternativeName>
        <fullName>Ribosomal RNA-processing protein 36</fullName>
    </alternativeName>
</protein>